<evidence type="ECO:0000255" key="1">
    <source>
        <dbReference type="HAMAP-Rule" id="MF_00196"/>
    </source>
</evidence>
<comment type="catalytic activity">
    <reaction evidence="1">
        <text>D-mannitol 1-phosphate + NAD(+) = beta-D-fructose 6-phosphate + NADH + H(+)</text>
        <dbReference type="Rhea" id="RHEA:19661"/>
        <dbReference type="ChEBI" id="CHEBI:15378"/>
        <dbReference type="ChEBI" id="CHEBI:57540"/>
        <dbReference type="ChEBI" id="CHEBI:57634"/>
        <dbReference type="ChEBI" id="CHEBI:57945"/>
        <dbReference type="ChEBI" id="CHEBI:61381"/>
        <dbReference type="EC" id="1.1.1.17"/>
    </reaction>
</comment>
<comment type="similarity">
    <text evidence="1">Belongs to the mannitol dehydrogenase family.</text>
</comment>
<name>MTLD_BACLD</name>
<protein>
    <recommendedName>
        <fullName evidence="1">Mannitol-1-phosphate 5-dehydrogenase</fullName>
        <ecNumber evidence="1">1.1.1.17</ecNumber>
    </recommendedName>
</protein>
<gene>
    <name evidence="1" type="primary">mtlD</name>
    <name type="ordered locus">BLi00507</name>
    <name type="ordered locus">BL02815</name>
</gene>
<reference key="1">
    <citation type="journal article" date="2004" name="J. Mol. Microbiol. Biotechnol.">
        <title>The complete genome sequence of Bacillus licheniformis DSM13, an organism with great industrial potential.</title>
        <authorList>
            <person name="Veith B."/>
            <person name="Herzberg C."/>
            <person name="Steckel S."/>
            <person name="Feesche J."/>
            <person name="Maurer K.H."/>
            <person name="Ehrenreich P."/>
            <person name="Baeumer S."/>
            <person name="Henne A."/>
            <person name="Liesegang H."/>
            <person name="Merkl R."/>
            <person name="Ehrenreich A."/>
            <person name="Gottschalk G."/>
        </authorList>
    </citation>
    <scope>NUCLEOTIDE SEQUENCE [LARGE SCALE GENOMIC DNA]</scope>
    <source>
        <strain>ATCC 14580 / DSM 13 / JCM 2505 / CCUG 7422 / NBRC 12200 / NCIMB 9375 / NCTC 10341 / NRRL NRS-1264 / Gibson 46</strain>
    </source>
</reference>
<reference key="2">
    <citation type="journal article" date="2004" name="Genome Biol.">
        <title>Complete genome sequence of the industrial bacterium Bacillus licheniformis and comparisons with closely related Bacillus species.</title>
        <authorList>
            <person name="Rey M.W."/>
            <person name="Ramaiya P."/>
            <person name="Nelson B.A."/>
            <person name="Brody-Karpin S.D."/>
            <person name="Zaretsky E.J."/>
            <person name="Tang M."/>
            <person name="Lopez de Leon A."/>
            <person name="Xiang H."/>
            <person name="Gusti V."/>
            <person name="Clausen I.G."/>
            <person name="Olsen P.B."/>
            <person name="Rasmussen M.D."/>
            <person name="Andersen J.T."/>
            <person name="Joergensen P.L."/>
            <person name="Larsen T.S."/>
            <person name="Sorokin A."/>
            <person name="Bolotin A."/>
            <person name="Lapidus A."/>
            <person name="Galleron N."/>
            <person name="Ehrlich S.D."/>
            <person name="Berka R.M."/>
        </authorList>
    </citation>
    <scope>NUCLEOTIDE SEQUENCE [LARGE SCALE GENOMIC DNA]</scope>
    <source>
        <strain>ATCC 14580 / DSM 13 / JCM 2505 / CCUG 7422 / NBRC 12200 / NCIMB 9375 / NCTC 10341 / NRRL NRS-1264 / Gibson 46</strain>
    </source>
</reference>
<accession>Q65NA1</accession>
<accession>Q62YQ5</accession>
<proteinExistence type="inferred from homology"/>
<feature type="chain" id="PRO_1000011795" description="Mannitol-1-phosphate 5-dehydrogenase">
    <location>
        <begin position="1"/>
        <end position="379"/>
    </location>
</feature>
<feature type="binding site" evidence="1">
    <location>
        <begin position="3"/>
        <end position="14"/>
    </location>
    <ligand>
        <name>NAD(+)</name>
        <dbReference type="ChEBI" id="CHEBI:57540"/>
    </ligand>
</feature>
<sequence>MIALHFGAGNIGRGFIGALLCKSGYDVVFADVNDAVINELNDKGRYTVEMADAGRKQETIGPVRAINSATQLDELYDLIAKADLVTTAVGPAVLKLIAEPIAEGLKRRMKINKQPLNIIACENMIGGSAHLREEIFARLTETERAAISDSVGFPNSAVDRIVPIQHHDDPLKVTVEPFFEWAVDQTEFAGKVPDIEGVTYVADLAPFIERKLFTVNTGHAMAAYAGYKKGLKTIKDAIHHPEVRQTVAGALEETGRYLVQTYDFTQEEHRAYMTKIIGRFENECLSDDVTRVARSPLRKLGRDDRLVGPARKLCDLGFEPVRLAEGIALALQFDCADDPEAVQLQSMIAEKGYAGVLRDVCGLEEDHSLFKLVISHLKA</sequence>
<organism>
    <name type="scientific">Bacillus licheniformis (strain ATCC 14580 / DSM 13 / JCM 2505 / CCUG 7422 / NBRC 12200 / NCIMB 9375 / NCTC 10341 / NRRL NRS-1264 / Gibson 46)</name>
    <dbReference type="NCBI Taxonomy" id="279010"/>
    <lineage>
        <taxon>Bacteria</taxon>
        <taxon>Bacillati</taxon>
        <taxon>Bacillota</taxon>
        <taxon>Bacilli</taxon>
        <taxon>Bacillales</taxon>
        <taxon>Bacillaceae</taxon>
        <taxon>Bacillus</taxon>
    </lineage>
</organism>
<keyword id="KW-0520">NAD</keyword>
<keyword id="KW-0560">Oxidoreductase</keyword>
<keyword id="KW-1185">Reference proteome</keyword>
<dbReference type="EC" id="1.1.1.17" evidence="1"/>
<dbReference type="EMBL" id="CP000002">
    <property type="protein sequence ID" value="AAU22103.1"/>
    <property type="molecule type" value="Genomic_DNA"/>
</dbReference>
<dbReference type="EMBL" id="AE017333">
    <property type="protein sequence ID" value="AAU39463.1"/>
    <property type="molecule type" value="Genomic_DNA"/>
</dbReference>
<dbReference type="RefSeq" id="WP_003179029.1">
    <property type="nucleotide sequence ID" value="NC_006322.1"/>
</dbReference>
<dbReference type="SMR" id="Q65NA1"/>
<dbReference type="STRING" id="279010.BL02815"/>
<dbReference type="KEGG" id="bld:BLi00507"/>
<dbReference type="KEGG" id="bli:BL02815"/>
<dbReference type="eggNOG" id="COG0246">
    <property type="taxonomic scope" value="Bacteria"/>
</dbReference>
<dbReference type="HOGENOM" id="CLU_036089_2_0_9"/>
<dbReference type="Proteomes" id="UP000000606">
    <property type="component" value="Chromosome"/>
</dbReference>
<dbReference type="GO" id="GO:0005829">
    <property type="term" value="C:cytosol"/>
    <property type="evidence" value="ECO:0007669"/>
    <property type="project" value="TreeGrafter"/>
</dbReference>
<dbReference type="GO" id="GO:0008926">
    <property type="term" value="F:mannitol-1-phosphate 5-dehydrogenase activity"/>
    <property type="evidence" value="ECO:0007669"/>
    <property type="project" value="UniProtKB-UniRule"/>
</dbReference>
<dbReference type="GO" id="GO:0019592">
    <property type="term" value="P:mannitol catabolic process"/>
    <property type="evidence" value="ECO:0007669"/>
    <property type="project" value="TreeGrafter"/>
</dbReference>
<dbReference type="Gene3D" id="1.10.1040.10">
    <property type="entry name" value="N-(1-d-carboxylethyl)-l-norvaline Dehydrogenase, domain 2"/>
    <property type="match status" value="1"/>
</dbReference>
<dbReference type="Gene3D" id="3.40.50.720">
    <property type="entry name" value="NAD(P)-binding Rossmann-like Domain"/>
    <property type="match status" value="1"/>
</dbReference>
<dbReference type="HAMAP" id="MF_00196">
    <property type="entry name" value="Mannitol_dehydrog"/>
    <property type="match status" value="1"/>
</dbReference>
<dbReference type="InterPro" id="IPR008927">
    <property type="entry name" value="6-PGluconate_DH-like_C_sf"/>
</dbReference>
<dbReference type="InterPro" id="IPR013328">
    <property type="entry name" value="6PGD_dom2"/>
</dbReference>
<dbReference type="InterPro" id="IPR023028">
    <property type="entry name" value="Mannitol_1_phos_5_DH"/>
</dbReference>
<dbReference type="InterPro" id="IPR000669">
    <property type="entry name" value="Mannitol_DH"/>
</dbReference>
<dbReference type="InterPro" id="IPR013118">
    <property type="entry name" value="Mannitol_DH_C"/>
</dbReference>
<dbReference type="InterPro" id="IPR023027">
    <property type="entry name" value="Mannitol_DH_CS"/>
</dbReference>
<dbReference type="InterPro" id="IPR013131">
    <property type="entry name" value="Mannitol_DH_N"/>
</dbReference>
<dbReference type="InterPro" id="IPR036291">
    <property type="entry name" value="NAD(P)-bd_dom_sf"/>
</dbReference>
<dbReference type="NCBIfam" id="NF002646">
    <property type="entry name" value="PRK02318.1-2"/>
    <property type="match status" value="1"/>
</dbReference>
<dbReference type="NCBIfam" id="NF002647">
    <property type="entry name" value="PRK02318.1-3"/>
    <property type="match status" value="1"/>
</dbReference>
<dbReference type="NCBIfam" id="NF002649">
    <property type="entry name" value="PRK02318.2-1"/>
    <property type="match status" value="1"/>
</dbReference>
<dbReference type="NCBIfam" id="NF002652">
    <property type="entry name" value="PRK02318.2-5"/>
    <property type="match status" value="1"/>
</dbReference>
<dbReference type="PANTHER" id="PTHR30524:SF0">
    <property type="entry name" value="ALTRONATE OXIDOREDUCTASE-RELATED"/>
    <property type="match status" value="1"/>
</dbReference>
<dbReference type="PANTHER" id="PTHR30524">
    <property type="entry name" value="MANNITOL-1-PHOSPHATE 5-DEHYDROGENASE"/>
    <property type="match status" value="1"/>
</dbReference>
<dbReference type="Pfam" id="PF01232">
    <property type="entry name" value="Mannitol_dh"/>
    <property type="match status" value="1"/>
</dbReference>
<dbReference type="Pfam" id="PF08125">
    <property type="entry name" value="Mannitol_dh_C"/>
    <property type="match status" value="1"/>
</dbReference>
<dbReference type="PRINTS" id="PR00084">
    <property type="entry name" value="MTLDHDRGNASE"/>
</dbReference>
<dbReference type="SUPFAM" id="SSF48179">
    <property type="entry name" value="6-phosphogluconate dehydrogenase C-terminal domain-like"/>
    <property type="match status" value="1"/>
</dbReference>
<dbReference type="SUPFAM" id="SSF51735">
    <property type="entry name" value="NAD(P)-binding Rossmann-fold domains"/>
    <property type="match status" value="1"/>
</dbReference>
<dbReference type="PROSITE" id="PS00974">
    <property type="entry name" value="MANNITOL_DHGENASE"/>
    <property type="match status" value="1"/>
</dbReference>